<comment type="similarity">
    <text evidence="1">Belongs to the UPF0301 (AlgH) family.</text>
</comment>
<feature type="chain" id="PRO_1000198309" description="UPF0301 protein XfasM23_1361">
    <location>
        <begin position="1"/>
        <end position="188"/>
    </location>
</feature>
<protein>
    <recommendedName>
        <fullName evidence="1">UPF0301 protein XfasM23_1361</fullName>
    </recommendedName>
</protein>
<evidence type="ECO:0000255" key="1">
    <source>
        <dbReference type="HAMAP-Rule" id="MF_00758"/>
    </source>
</evidence>
<gene>
    <name type="ordered locus">XfasM23_1361</name>
</gene>
<organism>
    <name type="scientific">Xylella fastidiosa (strain M23)</name>
    <dbReference type="NCBI Taxonomy" id="405441"/>
    <lineage>
        <taxon>Bacteria</taxon>
        <taxon>Pseudomonadati</taxon>
        <taxon>Pseudomonadota</taxon>
        <taxon>Gammaproteobacteria</taxon>
        <taxon>Lysobacterales</taxon>
        <taxon>Lysobacteraceae</taxon>
        <taxon>Xylella</taxon>
    </lineage>
</organism>
<accession>B2I5Z0</accession>
<name>Y1361_XYLF2</name>
<dbReference type="EMBL" id="CP001011">
    <property type="protein sequence ID" value="ACB92779.1"/>
    <property type="molecule type" value="Genomic_DNA"/>
</dbReference>
<dbReference type="RefSeq" id="WP_011098030.1">
    <property type="nucleotide sequence ID" value="NC_010577.1"/>
</dbReference>
<dbReference type="SMR" id="B2I5Z0"/>
<dbReference type="KEGG" id="xfn:XfasM23_1361"/>
<dbReference type="HOGENOM" id="CLU_057596_1_0_6"/>
<dbReference type="Proteomes" id="UP000001698">
    <property type="component" value="Chromosome"/>
</dbReference>
<dbReference type="GO" id="GO:0005829">
    <property type="term" value="C:cytosol"/>
    <property type="evidence" value="ECO:0007669"/>
    <property type="project" value="TreeGrafter"/>
</dbReference>
<dbReference type="Gene3D" id="3.40.1740.10">
    <property type="entry name" value="VC0467-like"/>
    <property type="match status" value="1"/>
</dbReference>
<dbReference type="HAMAP" id="MF_00758">
    <property type="entry name" value="UPF0301"/>
    <property type="match status" value="1"/>
</dbReference>
<dbReference type="InterPro" id="IPR003774">
    <property type="entry name" value="AlgH-like"/>
</dbReference>
<dbReference type="NCBIfam" id="NF001266">
    <property type="entry name" value="PRK00228.1-1"/>
    <property type="match status" value="1"/>
</dbReference>
<dbReference type="PANTHER" id="PTHR30327">
    <property type="entry name" value="UNCHARACTERIZED PROTEIN YQGE"/>
    <property type="match status" value="1"/>
</dbReference>
<dbReference type="PANTHER" id="PTHR30327:SF1">
    <property type="entry name" value="UPF0301 PROTEIN YQGE"/>
    <property type="match status" value="1"/>
</dbReference>
<dbReference type="Pfam" id="PF02622">
    <property type="entry name" value="DUF179"/>
    <property type="match status" value="1"/>
</dbReference>
<dbReference type="SUPFAM" id="SSF143456">
    <property type="entry name" value="VC0467-like"/>
    <property type="match status" value="1"/>
</dbReference>
<sequence>MSMPTMTLVNQLLIALPSMPDPHFARGVALICQHDSNGAMGVVLNRPSEYTLGEVLFQMGIETASETLREQVVLAGGPVHPDRGFVIYDSEHVWGPSLLIGDGLYLTTSRDVLAAMAEGSGPSRALVALGCAGWAAGQLELELVENNWLMVPADASLLFDTALEQRWQRAAGRIGVDLFRLTDYTGHA</sequence>
<reference key="1">
    <citation type="journal article" date="2010" name="J. Bacteriol.">
        <title>Whole genome sequences of two Xylella fastidiosa strains (M12 and M23) causing almond leaf scorch disease in California.</title>
        <authorList>
            <person name="Chen J."/>
            <person name="Xie G."/>
            <person name="Han S."/>
            <person name="Chertkov O."/>
            <person name="Sims D."/>
            <person name="Civerolo E.L."/>
        </authorList>
    </citation>
    <scope>NUCLEOTIDE SEQUENCE [LARGE SCALE GENOMIC DNA]</scope>
    <source>
        <strain>M23</strain>
    </source>
</reference>
<proteinExistence type="inferred from homology"/>